<accession>Q19707</accession>
<evidence type="ECO:0000255" key="1"/>
<evidence type="ECO:0000255" key="2">
    <source>
        <dbReference type="PROSITE-ProRule" id="PRU00375"/>
    </source>
</evidence>
<evidence type="ECO:0000255" key="3">
    <source>
        <dbReference type="PROSITE-ProRule" id="PRU00498"/>
    </source>
</evidence>
<evidence type="ECO:0000269" key="4">
    <source>
    </source>
</evidence>
<evidence type="ECO:0000305" key="5"/>
<evidence type="ECO:0000312" key="6">
    <source>
        <dbReference type="Proteomes" id="UP000001940"/>
    </source>
</evidence>
<evidence type="ECO:0000312" key="7">
    <source>
        <dbReference type="WormBase" id="F22B5.3"/>
    </source>
</evidence>
<protein>
    <recommendedName>
        <fullName evidence="7">Cuticlin-3</fullName>
    </recommendedName>
</protein>
<gene>
    <name evidence="7" type="primary">cut-3</name>
    <name evidence="7" type="ORF">F22B5.3</name>
</gene>
<sequence>MARYSLGLGLCLLVASVSAIPVDNNVEGEPEVECGPTSITVNFNTRNAFEGHVYVKGLFDQQECRNDEGGRQVAGIELPFDTCNVARTRSLNPKGVFVTTTVVVSFHPQFVTKVDRAYRVQCFYMEADKTVSTQIEVSDLTTAFQTQVVPMPICKYEILNGGPTGEPVQFATIGQQVYHKWTCDSETVDTFCAVVHSCTVDDGNGDTVQILDENGCALDKFLLNNLEYPTDLMAGQEAHVYKYADRSQLFYQCQISITVKEPNEECARPTCSEPQGFGAVKQANQTAQFFRVLKKRSAPVMENILDVRAELTTLEVLEGNLPSSLTQAQALVASREIGEDSFRQELCISSFHISVVTVFLGLTVFVAIFITYMIVSRMMVPSDKMQSAC</sequence>
<keyword id="KW-1003">Cell membrane</keyword>
<keyword id="KW-0193">Cuticle</keyword>
<keyword id="KW-0325">Glycoprotein</keyword>
<keyword id="KW-0472">Membrane</keyword>
<keyword id="KW-1185">Reference proteome</keyword>
<keyword id="KW-0732">Signal</keyword>
<keyword id="KW-0812">Transmembrane</keyword>
<keyword id="KW-1133">Transmembrane helix</keyword>
<comment type="function">
    <text evidence="4">Plays a role in alae formation in L1 larvae.</text>
</comment>
<comment type="subcellular location">
    <subcellularLocation>
        <location evidence="1">Cell membrane</location>
        <topology evidence="5">Single-pass type I membrane protein</topology>
    </subcellularLocation>
</comment>
<comment type="developmental stage">
    <text evidence="4">Only expressed in late embryos.</text>
</comment>
<comment type="disruption phenotype">
    <text evidence="4">RNAi-mediated knockdown results in shorter and fatter dauer phase animals (dumpy phenotype), which have no alae (PubMed:15936343). RNAi-mediated knockdown results in a folded pharynx and intestine in some animals (PubMed:15936343).</text>
</comment>
<name>CUT3_CAEEL</name>
<dbReference type="EMBL" id="BX284602">
    <property type="protein sequence ID" value="CAA90355.1"/>
    <property type="molecule type" value="Genomic_DNA"/>
</dbReference>
<dbReference type="PIR" id="T21239">
    <property type="entry name" value="T21239"/>
</dbReference>
<dbReference type="RefSeq" id="NP_495780.1">
    <property type="nucleotide sequence ID" value="NM_063379.8"/>
</dbReference>
<dbReference type="SMR" id="Q19707"/>
<dbReference type="DIP" id="DIP-24862N"/>
<dbReference type="FunCoup" id="Q19707">
    <property type="interactions" value="104"/>
</dbReference>
<dbReference type="IntAct" id="Q19707">
    <property type="interactions" value="1"/>
</dbReference>
<dbReference type="STRING" id="6239.F22B5.3.1"/>
<dbReference type="GlyCosmos" id="Q19707">
    <property type="glycosylation" value="1 site, No reported glycans"/>
</dbReference>
<dbReference type="PaxDb" id="6239-F22B5.3"/>
<dbReference type="PeptideAtlas" id="Q19707"/>
<dbReference type="EnsemblMetazoa" id="F22B5.3.1">
    <property type="protein sequence ID" value="F22B5.3.1"/>
    <property type="gene ID" value="WBGene00009041"/>
</dbReference>
<dbReference type="GeneID" id="174347"/>
<dbReference type="KEGG" id="cel:CELE_F22B5.3"/>
<dbReference type="UCSC" id="F22B5.3">
    <property type="organism name" value="c. elegans"/>
</dbReference>
<dbReference type="AGR" id="WB:WBGene00009041"/>
<dbReference type="CTD" id="174347"/>
<dbReference type="WormBase" id="F22B5.3">
    <property type="protein sequence ID" value="CE02198"/>
    <property type="gene ID" value="WBGene00009041"/>
    <property type="gene designation" value="cut-3"/>
</dbReference>
<dbReference type="eggNOG" id="ENOG502QV41">
    <property type="taxonomic scope" value="Eukaryota"/>
</dbReference>
<dbReference type="GeneTree" id="ENSGT00940000163650"/>
<dbReference type="HOGENOM" id="CLU_037896_1_1_1"/>
<dbReference type="InParanoid" id="Q19707"/>
<dbReference type="OMA" id="LFDQQEC"/>
<dbReference type="OrthoDB" id="6139674at2759"/>
<dbReference type="PhylomeDB" id="Q19707"/>
<dbReference type="PRO" id="PR:Q19707"/>
<dbReference type="Proteomes" id="UP000001940">
    <property type="component" value="Chromosome II"/>
</dbReference>
<dbReference type="Bgee" id="WBGene00009041">
    <property type="expression patterns" value="Expressed in pharyngeal muscle cell (C elegans) and 3 other cell types or tissues"/>
</dbReference>
<dbReference type="GO" id="GO:0005886">
    <property type="term" value="C:plasma membrane"/>
    <property type="evidence" value="ECO:0007669"/>
    <property type="project" value="UniProtKB-SubCell"/>
</dbReference>
<dbReference type="GO" id="GO:0042302">
    <property type="term" value="F:structural constituent of cuticle"/>
    <property type="evidence" value="ECO:0007669"/>
    <property type="project" value="UniProtKB-KW"/>
</dbReference>
<dbReference type="InterPro" id="IPR056953">
    <property type="entry name" value="CUT_N"/>
</dbReference>
<dbReference type="InterPro" id="IPR051962">
    <property type="entry name" value="Cuticlin"/>
</dbReference>
<dbReference type="InterPro" id="IPR001507">
    <property type="entry name" value="ZP_dom"/>
</dbReference>
<dbReference type="PANTHER" id="PTHR22907:SF60">
    <property type="entry name" value="CUTICLIN-3"/>
    <property type="match status" value="1"/>
</dbReference>
<dbReference type="PANTHER" id="PTHR22907">
    <property type="entry name" value="GH04558P"/>
    <property type="match status" value="1"/>
</dbReference>
<dbReference type="Pfam" id="PF25301">
    <property type="entry name" value="CUT_C"/>
    <property type="match status" value="1"/>
</dbReference>
<dbReference type="Pfam" id="PF25057">
    <property type="entry name" value="CUT_N"/>
    <property type="match status" value="1"/>
</dbReference>
<dbReference type="SMART" id="SM00241">
    <property type="entry name" value="ZP"/>
    <property type="match status" value="1"/>
</dbReference>
<dbReference type="PROSITE" id="PS51034">
    <property type="entry name" value="ZP_2"/>
    <property type="match status" value="1"/>
</dbReference>
<proteinExistence type="evidence at transcript level"/>
<feature type="signal peptide" evidence="1">
    <location>
        <begin position="1"/>
        <end position="19"/>
    </location>
</feature>
<feature type="chain" id="PRO_5004187366" description="Cuticlin-3">
    <location>
        <begin position="20"/>
        <end position="389"/>
    </location>
</feature>
<feature type="topological domain" description="Extracellular" evidence="5">
    <location>
        <begin position="20"/>
        <end position="354"/>
    </location>
</feature>
<feature type="transmembrane region" description="Helical" evidence="1">
    <location>
        <begin position="355"/>
        <end position="375"/>
    </location>
</feature>
<feature type="topological domain" description="Cytoplasmic" evidence="5">
    <location>
        <begin position="376"/>
        <end position="389"/>
    </location>
</feature>
<feature type="domain" description="ZP" evidence="2">
    <location>
        <begin position="33"/>
        <end position="278"/>
    </location>
</feature>
<feature type="glycosylation site" description="N-linked (GlcNAc...) asparagine" evidence="3">
    <location>
        <position position="284"/>
    </location>
</feature>
<organism evidence="6">
    <name type="scientific">Caenorhabditis elegans</name>
    <dbReference type="NCBI Taxonomy" id="6239"/>
    <lineage>
        <taxon>Eukaryota</taxon>
        <taxon>Metazoa</taxon>
        <taxon>Ecdysozoa</taxon>
        <taxon>Nematoda</taxon>
        <taxon>Chromadorea</taxon>
        <taxon>Rhabditida</taxon>
        <taxon>Rhabditina</taxon>
        <taxon>Rhabditomorpha</taxon>
        <taxon>Rhabditoidea</taxon>
        <taxon>Rhabditidae</taxon>
        <taxon>Peloderinae</taxon>
        <taxon>Caenorhabditis</taxon>
    </lineage>
</organism>
<reference evidence="6" key="1">
    <citation type="journal article" date="1998" name="Science">
        <title>Genome sequence of the nematode C. elegans: a platform for investigating biology.</title>
        <authorList>
            <consortium name="The C. elegans sequencing consortium"/>
        </authorList>
    </citation>
    <scope>NUCLEOTIDE SEQUENCE [LARGE SCALE GENOMIC DNA]</scope>
    <source>
        <strain evidence="6">Bristol N2</strain>
    </source>
</reference>
<reference evidence="5" key="2">
    <citation type="journal article" date="2005" name="Dev. Biol.">
        <title>The Zona Pellucida domain containing proteins, CUT-1, CUT-3 and CUT-5, play essential roles in the development of the larval alae in Caenorhabditis elegans.</title>
        <authorList>
            <person name="Sapio M.R."/>
            <person name="Hilliard M.A."/>
            <person name="Cermola M."/>
            <person name="Favre R."/>
            <person name="Bazzicalupo P."/>
        </authorList>
    </citation>
    <scope>FUNCTION</scope>
    <scope>DEVELOPMENTAL STAGE</scope>
    <scope>DISRUPTION PHENOTYPE</scope>
</reference>